<gene>
    <name evidence="1" type="primary">thiG</name>
    <name type="ordered locus">PMI2781</name>
</gene>
<dbReference type="EC" id="2.8.1.10" evidence="1"/>
<dbReference type="EMBL" id="AM942759">
    <property type="protein sequence ID" value="CAR45487.1"/>
    <property type="molecule type" value="Genomic_DNA"/>
</dbReference>
<dbReference type="RefSeq" id="WP_012368506.1">
    <property type="nucleotide sequence ID" value="NC_010554.1"/>
</dbReference>
<dbReference type="SMR" id="B4EYU5"/>
<dbReference type="EnsemblBacteria" id="CAR45487">
    <property type="protein sequence ID" value="CAR45487"/>
    <property type="gene ID" value="PMI2781"/>
</dbReference>
<dbReference type="GeneID" id="6801090"/>
<dbReference type="KEGG" id="pmr:PMI2781"/>
<dbReference type="eggNOG" id="COG2022">
    <property type="taxonomic scope" value="Bacteria"/>
</dbReference>
<dbReference type="HOGENOM" id="CLU_062233_1_0_6"/>
<dbReference type="UniPathway" id="UPA00060"/>
<dbReference type="Proteomes" id="UP000008319">
    <property type="component" value="Chromosome"/>
</dbReference>
<dbReference type="GO" id="GO:0005737">
    <property type="term" value="C:cytoplasm"/>
    <property type="evidence" value="ECO:0007669"/>
    <property type="project" value="UniProtKB-SubCell"/>
</dbReference>
<dbReference type="GO" id="GO:1990107">
    <property type="term" value="F:thiazole synthase activity"/>
    <property type="evidence" value="ECO:0007669"/>
    <property type="project" value="UniProtKB-EC"/>
</dbReference>
<dbReference type="GO" id="GO:0009229">
    <property type="term" value="P:thiamine diphosphate biosynthetic process"/>
    <property type="evidence" value="ECO:0007669"/>
    <property type="project" value="UniProtKB-UniRule"/>
</dbReference>
<dbReference type="CDD" id="cd04728">
    <property type="entry name" value="ThiG"/>
    <property type="match status" value="1"/>
</dbReference>
<dbReference type="FunFam" id="3.20.20.70:FF:000049">
    <property type="entry name" value="Thiazole synthase"/>
    <property type="match status" value="1"/>
</dbReference>
<dbReference type="Gene3D" id="3.20.20.70">
    <property type="entry name" value="Aldolase class I"/>
    <property type="match status" value="1"/>
</dbReference>
<dbReference type="HAMAP" id="MF_00443">
    <property type="entry name" value="ThiG"/>
    <property type="match status" value="1"/>
</dbReference>
<dbReference type="InterPro" id="IPR013785">
    <property type="entry name" value="Aldolase_TIM"/>
</dbReference>
<dbReference type="InterPro" id="IPR033983">
    <property type="entry name" value="Thiazole_synthase_ThiG"/>
</dbReference>
<dbReference type="InterPro" id="IPR008867">
    <property type="entry name" value="ThiG"/>
</dbReference>
<dbReference type="PANTHER" id="PTHR34266">
    <property type="entry name" value="THIAZOLE SYNTHASE"/>
    <property type="match status" value="1"/>
</dbReference>
<dbReference type="PANTHER" id="PTHR34266:SF2">
    <property type="entry name" value="THIAZOLE SYNTHASE"/>
    <property type="match status" value="1"/>
</dbReference>
<dbReference type="Pfam" id="PF05690">
    <property type="entry name" value="ThiG"/>
    <property type="match status" value="1"/>
</dbReference>
<dbReference type="SUPFAM" id="SSF110399">
    <property type="entry name" value="ThiG-like"/>
    <property type="match status" value="1"/>
</dbReference>
<feature type="chain" id="PRO_1000196885" description="Thiazole synthase">
    <location>
        <begin position="1"/>
        <end position="259"/>
    </location>
</feature>
<feature type="active site" description="Schiff-base intermediate with DXP" evidence="1">
    <location>
        <position position="95"/>
    </location>
</feature>
<feature type="binding site" evidence="1">
    <location>
        <position position="156"/>
    </location>
    <ligand>
        <name>1-deoxy-D-xylulose 5-phosphate</name>
        <dbReference type="ChEBI" id="CHEBI:57792"/>
    </ligand>
</feature>
<feature type="binding site" evidence="1">
    <location>
        <begin position="182"/>
        <end position="183"/>
    </location>
    <ligand>
        <name>1-deoxy-D-xylulose 5-phosphate</name>
        <dbReference type="ChEBI" id="CHEBI:57792"/>
    </ligand>
</feature>
<feature type="binding site" evidence="1">
    <location>
        <begin position="204"/>
        <end position="205"/>
    </location>
    <ligand>
        <name>1-deoxy-D-xylulose 5-phosphate</name>
        <dbReference type="ChEBI" id="CHEBI:57792"/>
    </ligand>
</feature>
<comment type="function">
    <text evidence="1">Catalyzes the rearrangement of 1-deoxy-D-xylulose 5-phosphate (DXP) to produce the thiazole phosphate moiety of thiamine. Sulfur is provided by the thiocarboxylate moiety of the carrier protein ThiS. In vitro, sulfur can be provided by H(2)S.</text>
</comment>
<comment type="catalytic activity">
    <reaction evidence="1">
        <text>[ThiS sulfur-carrier protein]-C-terminal-Gly-aminoethanethioate + 2-iminoacetate + 1-deoxy-D-xylulose 5-phosphate = [ThiS sulfur-carrier protein]-C-terminal Gly-Gly + 2-[(2R,5Z)-2-carboxy-4-methylthiazol-5(2H)-ylidene]ethyl phosphate + 2 H2O + H(+)</text>
        <dbReference type="Rhea" id="RHEA:26297"/>
        <dbReference type="Rhea" id="RHEA-COMP:12909"/>
        <dbReference type="Rhea" id="RHEA-COMP:19908"/>
        <dbReference type="ChEBI" id="CHEBI:15377"/>
        <dbReference type="ChEBI" id="CHEBI:15378"/>
        <dbReference type="ChEBI" id="CHEBI:57792"/>
        <dbReference type="ChEBI" id="CHEBI:62899"/>
        <dbReference type="ChEBI" id="CHEBI:77846"/>
        <dbReference type="ChEBI" id="CHEBI:90778"/>
        <dbReference type="ChEBI" id="CHEBI:232372"/>
        <dbReference type="EC" id="2.8.1.10"/>
    </reaction>
</comment>
<comment type="pathway">
    <text evidence="1">Cofactor biosynthesis; thiamine diphosphate biosynthesis.</text>
</comment>
<comment type="subunit">
    <text evidence="1">Homotetramer. Forms heterodimers with either ThiH or ThiS.</text>
</comment>
<comment type="subcellular location">
    <subcellularLocation>
        <location evidence="1">Cytoplasm</location>
    </subcellularLocation>
</comment>
<comment type="similarity">
    <text evidence="1">Belongs to the ThiG family.</text>
</comment>
<organism>
    <name type="scientific">Proteus mirabilis (strain HI4320)</name>
    <dbReference type="NCBI Taxonomy" id="529507"/>
    <lineage>
        <taxon>Bacteria</taxon>
        <taxon>Pseudomonadati</taxon>
        <taxon>Pseudomonadota</taxon>
        <taxon>Gammaproteobacteria</taxon>
        <taxon>Enterobacterales</taxon>
        <taxon>Morganellaceae</taxon>
        <taxon>Proteus</taxon>
    </lineage>
</organism>
<sequence length="259" mass="27449">MLKIADTTFTSRLFTGTGKFATPTLMAEAIKASGSQLVTMAMKRVDLKNGNDDLIAPLKSLGIKLLPNTSGAKTAQEAVFAARLAKEAFDTHWIKLEIHPDTKYLLPDPIETLKAAELLVKEGFVVLPYCSADPVLCRRLEEVGCAAVMPLGSPIGSNQGLQTRDFLRIIIEQTSIPVVVDAGIGAPSHALEALELGADAVLVNTAIAVAKNPVLMAQAFKAAIDAGELARQSGLAVPTSITHMQAQASSPLTQYLEAF</sequence>
<proteinExistence type="inferred from homology"/>
<protein>
    <recommendedName>
        <fullName evidence="1">Thiazole synthase</fullName>
        <ecNumber evidence="1">2.8.1.10</ecNumber>
    </recommendedName>
</protein>
<name>THIG_PROMH</name>
<evidence type="ECO:0000255" key="1">
    <source>
        <dbReference type="HAMAP-Rule" id="MF_00443"/>
    </source>
</evidence>
<keyword id="KW-0963">Cytoplasm</keyword>
<keyword id="KW-1185">Reference proteome</keyword>
<keyword id="KW-0704">Schiff base</keyword>
<keyword id="KW-0784">Thiamine biosynthesis</keyword>
<keyword id="KW-0808">Transferase</keyword>
<accession>B4EYU5</accession>
<reference key="1">
    <citation type="journal article" date="2008" name="J. Bacteriol.">
        <title>Complete genome sequence of uropathogenic Proteus mirabilis, a master of both adherence and motility.</title>
        <authorList>
            <person name="Pearson M.M."/>
            <person name="Sebaihia M."/>
            <person name="Churcher C."/>
            <person name="Quail M.A."/>
            <person name="Seshasayee A.S."/>
            <person name="Luscombe N.M."/>
            <person name="Abdellah Z."/>
            <person name="Arrosmith C."/>
            <person name="Atkin B."/>
            <person name="Chillingworth T."/>
            <person name="Hauser H."/>
            <person name="Jagels K."/>
            <person name="Moule S."/>
            <person name="Mungall K."/>
            <person name="Norbertczak H."/>
            <person name="Rabbinowitsch E."/>
            <person name="Walker D."/>
            <person name="Whithead S."/>
            <person name="Thomson N.R."/>
            <person name="Rather P.N."/>
            <person name="Parkhill J."/>
            <person name="Mobley H.L.T."/>
        </authorList>
    </citation>
    <scope>NUCLEOTIDE SEQUENCE [LARGE SCALE GENOMIC DNA]</scope>
    <source>
        <strain>HI4320</strain>
    </source>
</reference>